<gene>
    <name type="primary">aur1</name>
    <name type="ORF">SPAC3H8.06</name>
</gene>
<feature type="chain" id="PRO_0000064765" description="Inositol phosphorylceramide synthase catalytic subunit aur1">
    <location>
        <begin position="1"/>
        <end position="422"/>
    </location>
</feature>
<feature type="topological domain" description="Cytoplasmic" evidence="1">
    <location>
        <begin position="1"/>
        <end position="47"/>
    </location>
</feature>
<feature type="transmembrane region" description="Helical" evidence="2">
    <location>
        <begin position="48"/>
        <end position="68"/>
    </location>
</feature>
<feature type="transmembrane region" description="Helical" evidence="2">
    <location>
        <begin position="69"/>
        <end position="85"/>
    </location>
</feature>
<feature type="topological domain" description="Cytoplasmic" evidence="1">
    <location>
        <begin position="86"/>
        <end position="87"/>
    </location>
</feature>
<feature type="transmembrane region" description="Helical" evidence="2">
    <location>
        <begin position="88"/>
        <end position="108"/>
    </location>
</feature>
<feature type="topological domain" description="Lumenal" evidence="1">
    <location>
        <begin position="109"/>
        <end position="159"/>
    </location>
</feature>
<feature type="transmembrane region" description="Helical" evidence="2">
    <location>
        <begin position="160"/>
        <end position="180"/>
    </location>
</feature>
<feature type="topological domain" description="Cytoplasmic" evidence="1">
    <location>
        <begin position="181"/>
        <end position="183"/>
    </location>
</feature>
<feature type="transmembrane region" description="Helical" evidence="2">
    <location>
        <begin position="184"/>
        <end position="204"/>
    </location>
</feature>
<feature type="topological domain" description="Lumenal" evidence="1">
    <location>
        <begin position="205"/>
        <end position="245"/>
    </location>
</feature>
<feature type="transmembrane region" description="Helical" evidence="2">
    <location>
        <begin position="246"/>
        <end position="266"/>
    </location>
</feature>
<feature type="topological domain" description="Cytoplasmic" evidence="1">
    <location>
        <begin position="267"/>
        <end position="274"/>
    </location>
</feature>
<feature type="transmembrane region" description="Helical" evidence="2">
    <location>
        <begin position="275"/>
        <end position="292"/>
    </location>
</feature>
<feature type="transmembrane region" description="Helical" evidence="2">
    <location>
        <begin position="293"/>
        <end position="313"/>
    </location>
</feature>
<feature type="topological domain" description="Cytoplasmic" evidence="1">
    <location>
        <begin position="314"/>
        <end position="422"/>
    </location>
</feature>
<feature type="region of interest" description="Disordered" evidence="3">
    <location>
        <begin position="386"/>
        <end position="406"/>
    </location>
</feature>
<feature type="modified residue" description="Phosphoserine" evidence="4">
    <location>
        <position position="353"/>
    </location>
</feature>
<feature type="glycosylation site" description="N-linked (GlcNAc...) asparagine" evidence="2">
    <location>
        <position position="132"/>
    </location>
</feature>
<feature type="mutagenesis site" description="In aur1-1; AbA resistant." evidence="5">
    <original>G</original>
    <variation>C</variation>
    <location>
        <position position="240"/>
    </location>
</feature>
<dbReference type="EC" id="2.-.-.-"/>
<dbReference type="EMBL" id="AB000821">
    <property type="protein sequence ID" value="BAA19190.1"/>
    <property type="molecule type" value="Genomic_DNA"/>
</dbReference>
<dbReference type="EMBL" id="CU329670">
    <property type="protein sequence ID" value="CAA93163.1"/>
    <property type="molecule type" value="Genomic_DNA"/>
</dbReference>
<dbReference type="PIR" id="T38764">
    <property type="entry name" value="T38764"/>
</dbReference>
<dbReference type="RefSeq" id="NP_592999.1">
    <property type="nucleotide sequence ID" value="NM_001018398.2"/>
</dbReference>
<dbReference type="BioGRID" id="280046">
    <property type="interactions" value="1"/>
</dbReference>
<dbReference type="FunCoup" id="Q10142">
    <property type="interactions" value="101"/>
</dbReference>
<dbReference type="STRING" id="284812.Q10142"/>
<dbReference type="GlyCosmos" id="Q10142">
    <property type="glycosylation" value="1 site, No reported glycans"/>
</dbReference>
<dbReference type="iPTMnet" id="Q10142"/>
<dbReference type="PaxDb" id="4896-SPAC3H8.06.1"/>
<dbReference type="EnsemblFungi" id="SPAC3H8.06.1">
    <property type="protein sequence ID" value="SPAC3H8.06.1:pep"/>
    <property type="gene ID" value="SPAC3H8.06"/>
</dbReference>
<dbReference type="GeneID" id="2543632"/>
<dbReference type="KEGG" id="spo:2543632"/>
<dbReference type="PomBase" id="SPAC3H8.06">
    <property type="gene designation" value="aur1"/>
</dbReference>
<dbReference type="VEuPathDB" id="FungiDB:SPAC3H8.06"/>
<dbReference type="eggNOG" id="ENOG502QPQM">
    <property type="taxonomic scope" value="Eukaryota"/>
</dbReference>
<dbReference type="HOGENOM" id="CLU_030747_2_0_1"/>
<dbReference type="InParanoid" id="Q10142"/>
<dbReference type="OMA" id="CWCTMYL"/>
<dbReference type="PhylomeDB" id="Q10142"/>
<dbReference type="PRO" id="PR:Q10142"/>
<dbReference type="Proteomes" id="UP000002485">
    <property type="component" value="Chromosome I"/>
</dbReference>
<dbReference type="GO" id="GO:0005794">
    <property type="term" value="C:Golgi apparatus"/>
    <property type="evidence" value="ECO:0007005"/>
    <property type="project" value="PomBase"/>
</dbReference>
<dbReference type="GO" id="GO:0032580">
    <property type="term" value="C:Golgi cisterna membrane"/>
    <property type="evidence" value="ECO:0007669"/>
    <property type="project" value="UniProtKB-SubCell"/>
</dbReference>
<dbReference type="GO" id="GO:0000139">
    <property type="term" value="C:Golgi membrane"/>
    <property type="evidence" value="ECO:0000305"/>
    <property type="project" value="PomBase"/>
</dbReference>
<dbReference type="GO" id="GO:0070916">
    <property type="term" value="C:inositol phosphoceramide synthase complex"/>
    <property type="evidence" value="ECO:0000318"/>
    <property type="project" value="GO_Central"/>
</dbReference>
<dbReference type="GO" id="GO:0045140">
    <property type="term" value="F:inositol phosphoceramide synthase activity"/>
    <property type="evidence" value="ECO:0000266"/>
    <property type="project" value="PomBase"/>
</dbReference>
<dbReference type="GO" id="GO:0006676">
    <property type="term" value="P:mannosyl diphosphorylinositol ceramide metabolic process"/>
    <property type="evidence" value="ECO:0000318"/>
    <property type="project" value="GO_Central"/>
</dbReference>
<dbReference type="GO" id="GO:0030148">
    <property type="term" value="P:sphingolipid biosynthetic process"/>
    <property type="evidence" value="ECO:0000318"/>
    <property type="project" value="GO_Central"/>
</dbReference>
<dbReference type="CDD" id="cd03386">
    <property type="entry name" value="PAP2_Aur1_like"/>
    <property type="match status" value="1"/>
</dbReference>
<dbReference type="FunFam" id="1.20.144.10:FF:000015">
    <property type="entry name" value="Aureobasidin resistance protein Aur1"/>
    <property type="match status" value="1"/>
</dbReference>
<dbReference type="Gene3D" id="1.20.144.10">
    <property type="entry name" value="Phosphatidic acid phosphatase type 2/haloperoxidase"/>
    <property type="match status" value="1"/>
</dbReference>
<dbReference type="InterPro" id="IPR026841">
    <property type="entry name" value="Aur1/Ipt1"/>
</dbReference>
<dbReference type="InterPro" id="IPR052185">
    <property type="entry name" value="IPC_Synthase-Related"/>
</dbReference>
<dbReference type="InterPro" id="IPR036938">
    <property type="entry name" value="P_Acid_Pase_2/haloperoxi_sf"/>
</dbReference>
<dbReference type="InterPro" id="IPR000326">
    <property type="entry name" value="P_Acid_Pase_2/haloperoxidase"/>
</dbReference>
<dbReference type="PANTHER" id="PTHR31310">
    <property type="match status" value="1"/>
</dbReference>
<dbReference type="PANTHER" id="PTHR31310:SF11">
    <property type="entry name" value="INOSITOL PHOSPHORYLCERAMIDE SYNTHASE CATALYTIC SUBUNIT AUR1"/>
    <property type="match status" value="1"/>
</dbReference>
<dbReference type="Pfam" id="PF14378">
    <property type="entry name" value="PAP2_3"/>
    <property type="match status" value="1"/>
</dbReference>
<dbReference type="SMART" id="SM00014">
    <property type="entry name" value="acidPPc"/>
    <property type="match status" value="1"/>
</dbReference>
<dbReference type="SUPFAM" id="SSF48317">
    <property type="entry name" value="Acid phosphatase/Vanadium-dependent haloperoxidase"/>
    <property type="match status" value="1"/>
</dbReference>
<accession>Q10142</accession>
<accession>P79014</accession>
<organism>
    <name type="scientific">Schizosaccharomyces pombe (strain 972 / ATCC 24843)</name>
    <name type="common">Fission yeast</name>
    <dbReference type="NCBI Taxonomy" id="284812"/>
    <lineage>
        <taxon>Eukaryota</taxon>
        <taxon>Fungi</taxon>
        <taxon>Dikarya</taxon>
        <taxon>Ascomycota</taxon>
        <taxon>Taphrinomycotina</taxon>
        <taxon>Schizosaccharomycetes</taxon>
        <taxon>Schizosaccharomycetales</taxon>
        <taxon>Schizosaccharomycetaceae</taxon>
        <taxon>Schizosaccharomyces</taxon>
    </lineage>
</organism>
<name>AUR1_SCHPO</name>
<protein>
    <recommendedName>
        <fullName>Inositol phosphorylceramide synthase catalytic subunit aur1</fullName>
        <shortName>IPC synthase catalytic subunit aur1</shortName>
        <ecNumber>2.-.-.-</ecNumber>
    </recommendedName>
    <alternativeName>
        <fullName>Aureobasidin A resistance protein homolog</fullName>
    </alternativeName>
    <alternativeName>
        <fullName>Phosphatidylinositol:ceramide phosphoinositol transferase</fullName>
    </alternativeName>
</protein>
<comment type="function">
    <text evidence="1">Catalytic component of the inositol phosphorylceramide synthase which catalyzes the addition of a phosphorylinositol group onto ceramide to form inositol phosphorylceramide, an essential step in sphingolipid biosynthesis.</text>
</comment>
<comment type="activity regulation">
    <text>Inhibited by aureobasidin A (AbA).</text>
</comment>
<comment type="subunit">
    <text evidence="1">Component of the inositol phosphorylceramide synthase complex composed of at least aur1 and kei1.</text>
</comment>
<comment type="subcellular location">
    <subcellularLocation>
        <location evidence="6">Golgi apparatus</location>
        <location evidence="6">Golgi stack membrane</location>
        <topology evidence="6">Multi-pass membrane protein</topology>
    </subcellularLocation>
</comment>
<comment type="similarity">
    <text evidence="6">Belongs to the AUR1 family.</text>
</comment>
<proteinExistence type="evidence at protein level"/>
<keyword id="KW-0325">Glycoprotein</keyword>
<keyword id="KW-0333">Golgi apparatus</keyword>
<keyword id="KW-0443">Lipid metabolism</keyword>
<keyword id="KW-0472">Membrane</keyword>
<keyword id="KW-0597">Phosphoprotein</keyword>
<keyword id="KW-1185">Reference proteome</keyword>
<keyword id="KW-0746">Sphingolipid metabolism</keyword>
<keyword id="KW-0808">Transferase</keyword>
<keyword id="KW-0812">Transmembrane</keyword>
<keyword id="KW-1133">Transmembrane helix</keyword>
<sequence>MSALSTLKKRLAACNRASQYKLETSLNPMPTFRLLRNTKWSWTHLQYVFLAGNLIFACIVIESPGFWGKFGIACLLAIALTVPLTRQIFFPAIVIITWAILFYSCRFIPERWRPPIWVRVLPTLENILYGSNLSSLLSKTTHSILDILAWVPYGVMHYSAPFIISFILFIFAPPGTLPVWARTFGYMNLFGVLIQMAFPCSPPWYENMYGLEPATYAVRGSPGGLARIDALFGTSIYTDGFSNSPVVFGAFPSLHAGWAMLEALFLSHVFPRYRFCFYGYVLWLCWCTMYLTHHYFVDLVGGMCLAIICFVFAQKLRLPQLQTGKILRWEYEFVIHGHGLSEKTSNSLARTGSPYLLGRDSFTQNPNAVAFMSGLNNMELANTDHEWSVGSSSPEPLPSPAADLIDRPASTTSSIFDASHLP</sequence>
<evidence type="ECO:0000250" key="1"/>
<evidence type="ECO:0000255" key="2"/>
<evidence type="ECO:0000256" key="3">
    <source>
        <dbReference type="SAM" id="MobiDB-lite"/>
    </source>
</evidence>
<evidence type="ECO:0000269" key="4">
    <source>
    </source>
</evidence>
<evidence type="ECO:0000269" key="5">
    <source>
    </source>
</evidence>
<evidence type="ECO:0000305" key="6"/>
<reference key="1">
    <citation type="journal article" date="1998" name="Curr. Genet.">
        <title>Isolation and characterization of the aureobasidin A-resistant gene, aur1R, on Schizosaccharomyces pombe: roles of Aur1p+ in cell morphogenesis.</title>
        <authorList>
            <person name="Hashida-Okado T."/>
            <person name="Yasumoto R."/>
            <person name="Endo M."/>
            <person name="Takesako K."/>
            <person name="Kato I."/>
        </authorList>
    </citation>
    <scope>NUCLEOTIDE SEQUENCE [GENOMIC DNA]</scope>
    <scope>MUTAGENESIS OF GLY-240</scope>
    <source>
        <strain>JY745</strain>
    </source>
</reference>
<reference key="2">
    <citation type="journal article" date="2002" name="Nature">
        <title>The genome sequence of Schizosaccharomyces pombe.</title>
        <authorList>
            <person name="Wood V."/>
            <person name="Gwilliam R."/>
            <person name="Rajandream M.A."/>
            <person name="Lyne M.H."/>
            <person name="Lyne R."/>
            <person name="Stewart A."/>
            <person name="Sgouros J.G."/>
            <person name="Peat N."/>
            <person name="Hayles J."/>
            <person name="Baker S.G."/>
            <person name="Basham D."/>
            <person name="Bowman S."/>
            <person name="Brooks K."/>
            <person name="Brown D."/>
            <person name="Brown S."/>
            <person name="Chillingworth T."/>
            <person name="Churcher C.M."/>
            <person name="Collins M."/>
            <person name="Connor R."/>
            <person name="Cronin A."/>
            <person name="Davis P."/>
            <person name="Feltwell T."/>
            <person name="Fraser A."/>
            <person name="Gentles S."/>
            <person name="Goble A."/>
            <person name="Hamlin N."/>
            <person name="Harris D.E."/>
            <person name="Hidalgo J."/>
            <person name="Hodgson G."/>
            <person name="Holroyd S."/>
            <person name="Hornsby T."/>
            <person name="Howarth S."/>
            <person name="Huckle E.J."/>
            <person name="Hunt S."/>
            <person name="Jagels K."/>
            <person name="James K.D."/>
            <person name="Jones L."/>
            <person name="Jones M."/>
            <person name="Leather S."/>
            <person name="McDonald S."/>
            <person name="McLean J."/>
            <person name="Mooney P."/>
            <person name="Moule S."/>
            <person name="Mungall K.L."/>
            <person name="Murphy L.D."/>
            <person name="Niblett D."/>
            <person name="Odell C."/>
            <person name="Oliver K."/>
            <person name="O'Neil S."/>
            <person name="Pearson D."/>
            <person name="Quail M.A."/>
            <person name="Rabbinowitsch E."/>
            <person name="Rutherford K.M."/>
            <person name="Rutter S."/>
            <person name="Saunders D."/>
            <person name="Seeger K."/>
            <person name="Sharp S."/>
            <person name="Skelton J."/>
            <person name="Simmonds M.N."/>
            <person name="Squares R."/>
            <person name="Squares S."/>
            <person name="Stevens K."/>
            <person name="Taylor K."/>
            <person name="Taylor R.G."/>
            <person name="Tivey A."/>
            <person name="Walsh S.V."/>
            <person name="Warren T."/>
            <person name="Whitehead S."/>
            <person name="Woodward J.R."/>
            <person name="Volckaert G."/>
            <person name="Aert R."/>
            <person name="Robben J."/>
            <person name="Grymonprez B."/>
            <person name="Weltjens I."/>
            <person name="Vanstreels E."/>
            <person name="Rieger M."/>
            <person name="Schaefer M."/>
            <person name="Mueller-Auer S."/>
            <person name="Gabel C."/>
            <person name="Fuchs M."/>
            <person name="Duesterhoeft A."/>
            <person name="Fritzc C."/>
            <person name="Holzer E."/>
            <person name="Moestl D."/>
            <person name="Hilbert H."/>
            <person name="Borzym K."/>
            <person name="Langer I."/>
            <person name="Beck A."/>
            <person name="Lehrach H."/>
            <person name="Reinhardt R."/>
            <person name="Pohl T.M."/>
            <person name="Eger P."/>
            <person name="Zimmermann W."/>
            <person name="Wedler H."/>
            <person name="Wambutt R."/>
            <person name="Purnelle B."/>
            <person name="Goffeau A."/>
            <person name="Cadieu E."/>
            <person name="Dreano S."/>
            <person name="Gloux S."/>
            <person name="Lelaure V."/>
            <person name="Mottier S."/>
            <person name="Galibert F."/>
            <person name="Aves S.J."/>
            <person name="Xiang Z."/>
            <person name="Hunt C."/>
            <person name="Moore K."/>
            <person name="Hurst S.M."/>
            <person name="Lucas M."/>
            <person name="Rochet M."/>
            <person name="Gaillardin C."/>
            <person name="Tallada V.A."/>
            <person name="Garzon A."/>
            <person name="Thode G."/>
            <person name="Daga R.R."/>
            <person name="Cruzado L."/>
            <person name="Jimenez J."/>
            <person name="Sanchez M."/>
            <person name="del Rey F."/>
            <person name="Benito J."/>
            <person name="Dominguez A."/>
            <person name="Revuelta J.L."/>
            <person name="Moreno S."/>
            <person name="Armstrong J."/>
            <person name="Forsburg S.L."/>
            <person name="Cerutti L."/>
            <person name="Lowe T."/>
            <person name="McCombie W.R."/>
            <person name="Paulsen I."/>
            <person name="Potashkin J."/>
            <person name="Shpakovski G.V."/>
            <person name="Ussery D."/>
            <person name="Barrell B.G."/>
            <person name="Nurse P."/>
        </authorList>
    </citation>
    <scope>NUCLEOTIDE SEQUENCE [LARGE SCALE GENOMIC DNA]</scope>
    <source>
        <strain>972 / ATCC 24843</strain>
    </source>
</reference>
<reference key="3">
    <citation type="journal article" date="2006" name="Nat. Biotechnol.">
        <title>ORFeome cloning and global analysis of protein localization in the fission yeast Schizosaccharomyces pombe.</title>
        <authorList>
            <person name="Matsuyama A."/>
            <person name="Arai R."/>
            <person name="Yashiroda Y."/>
            <person name="Shirai A."/>
            <person name="Kamata A."/>
            <person name="Sekido S."/>
            <person name="Kobayashi Y."/>
            <person name="Hashimoto A."/>
            <person name="Hamamoto M."/>
            <person name="Hiraoka Y."/>
            <person name="Horinouchi S."/>
            <person name="Yoshida M."/>
        </authorList>
    </citation>
    <scope>SUBCELLULAR LOCATION [LARGE SCALE ANALYSIS]</scope>
</reference>
<reference key="4">
    <citation type="journal article" date="2008" name="J. Proteome Res.">
        <title>Phosphoproteome analysis of fission yeast.</title>
        <authorList>
            <person name="Wilson-Grady J.T."/>
            <person name="Villen J."/>
            <person name="Gygi S.P."/>
        </authorList>
    </citation>
    <scope>PHOSPHORYLATION [LARGE SCALE ANALYSIS] AT SER-353</scope>
    <scope>IDENTIFICATION BY MASS SPECTROMETRY</scope>
</reference>